<name>RS21_SALDC</name>
<sequence length="71" mass="8500">MPVIKVRENEPFDVALRRFKRSCEKAGVLAEVRRREFYEKPTTERKRAKASAVKRHAKKLARENARRTRLY</sequence>
<organism>
    <name type="scientific">Salmonella dublin (strain CT_02021853)</name>
    <dbReference type="NCBI Taxonomy" id="439851"/>
    <lineage>
        <taxon>Bacteria</taxon>
        <taxon>Pseudomonadati</taxon>
        <taxon>Pseudomonadota</taxon>
        <taxon>Gammaproteobacteria</taxon>
        <taxon>Enterobacterales</taxon>
        <taxon>Enterobacteriaceae</taxon>
        <taxon>Salmonella</taxon>
    </lineage>
</organism>
<proteinExistence type="inferred from homology"/>
<comment type="similarity">
    <text evidence="1">Belongs to the bacterial ribosomal protein bS21 family.</text>
</comment>
<gene>
    <name evidence="1" type="primary">rpsU</name>
    <name type="ordered locus">SeD_A3565</name>
</gene>
<keyword id="KW-0687">Ribonucleoprotein</keyword>
<keyword id="KW-0689">Ribosomal protein</keyword>
<dbReference type="EMBL" id="CP001144">
    <property type="protein sequence ID" value="ACH75335.1"/>
    <property type="molecule type" value="Genomic_DNA"/>
</dbReference>
<dbReference type="RefSeq" id="WP_001144069.1">
    <property type="nucleotide sequence ID" value="NC_011205.1"/>
</dbReference>
<dbReference type="SMR" id="B5FHU4"/>
<dbReference type="GeneID" id="98390195"/>
<dbReference type="KEGG" id="sed:SeD_A3565"/>
<dbReference type="HOGENOM" id="CLU_159258_1_0_6"/>
<dbReference type="Proteomes" id="UP000008322">
    <property type="component" value="Chromosome"/>
</dbReference>
<dbReference type="GO" id="GO:1990904">
    <property type="term" value="C:ribonucleoprotein complex"/>
    <property type="evidence" value="ECO:0007669"/>
    <property type="project" value="UniProtKB-KW"/>
</dbReference>
<dbReference type="GO" id="GO:0005840">
    <property type="term" value="C:ribosome"/>
    <property type="evidence" value="ECO:0007669"/>
    <property type="project" value="UniProtKB-KW"/>
</dbReference>
<dbReference type="GO" id="GO:0003735">
    <property type="term" value="F:structural constituent of ribosome"/>
    <property type="evidence" value="ECO:0007669"/>
    <property type="project" value="InterPro"/>
</dbReference>
<dbReference type="GO" id="GO:0006412">
    <property type="term" value="P:translation"/>
    <property type="evidence" value="ECO:0007669"/>
    <property type="project" value="UniProtKB-UniRule"/>
</dbReference>
<dbReference type="FunFam" id="1.20.5.1150:FF:000001">
    <property type="entry name" value="30S ribosomal protein S21"/>
    <property type="match status" value="1"/>
</dbReference>
<dbReference type="Gene3D" id="1.20.5.1150">
    <property type="entry name" value="Ribosomal protein S8"/>
    <property type="match status" value="1"/>
</dbReference>
<dbReference type="HAMAP" id="MF_00358">
    <property type="entry name" value="Ribosomal_bS21"/>
    <property type="match status" value="1"/>
</dbReference>
<dbReference type="InterPro" id="IPR001911">
    <property type="entry name" value="Ribosomal_bS21"/>
</dbReference>
<dbReference type="InterPro" id="IPR018278">
    <property type="entry name" value="Ribosomal_bS21_CS"/>
</dbReference>
<dbReference type="InterPro" id="IPR038380">
    <property type="entry name" value="Ribosomal_bS21_sf"/>
</dbReference>
<dbReference type="NCBIfam" id="TIGR00030">
    <property type="entry name" value="S21p"/>
    <property type="match status" value="1"/>
</dbReference>
<dbReference type="PANTHER" id="PTHR21109">
    <property type="entry name" value="MITOCHONDRIAL 28S RIBOSOMAL PROTEIN S21"/>
    <property type="match status" value="1"/>
</dbReference>
<dbReference type="PANTHER" id="PTHR21109:SF22">
    <property type="entry name" value="SMALL RIBOSOMAL SUBUNIT PROTEIN BS21"/>
    <property type="match status" value="1"/>
</dbReference>
<dbReference type="Pfam" id="PF01165">
    <property type="entry name" value="Ribosomal_S21"/>
    <property type="match status" value="1"/>
</dbReference>
<dbReference type="PRINTS" id="PR00976">
    <property type="entry name" value="RIBOSOMALS21"/>
</dbReference>
<dbReference type="PROSITE" id="PS01181">
    <property type="entry name" value="RIBOSOMAL_S21"/>
    <property type="match status" value="1"/>
</dbReference>
<evidence type="ECO:0000255" key="1">
    <source>
        <dbReference type="HAMAP-Rule" id="MF_00358"/>
    </source>
</evidence>
<evidence type="ECO:0000256" key="2">
    <source>
        <dbReference type="SAM" id="MobiDB-lite"/>
    </source>
</evidence>
<evidence type="ECO:0000305" key="3"/>
<protein>
    <recommendedName>
        <fullName evidence="1">Small ribosomal subunit protein bS21</fullName>
    </recommendedName>
    <alternativeName>
        <fullName evidence="3">30S ribosomal protein S21</fullName>
    </alternativeName>
</protein>
<accession>B5FHU4</accession>
<reference key="1">
    <citation type="journal article" date="2011" name="J. Bacteriol.">
        <title>Comparative genomics of 28 Salmonella enterica isolates: evidence for CRISPR-mediated adaptive sublineage evolution.</title>
        <authorList>
            <person name="Fricke W.F."/>
            <person name="Mammel M.K."/>
            <person name="McDermott P.F."/>
            <person name="Tartera C."/>
            <person name="White D.G."/>
            <person name="Leclerc J.E."/>
            <person name="Ravel J."/>
            <person name="Cebula T.A."/>
        </authorList>
    </citation>
    <scope>NUCLEOTIDE SEQUENCE [LARGE SCALE GENOMIC DNA]</scope>
    <source>
        <strain>CT_02021853</strain>
    </source>
</reference>
<feature type="chain" id="PRO_1000120655" description="Small ribosomal subunit protein bS21">
    <location>
        <begin position="1"/>
        <end position="71"/>
    </location>
</feature>
<feature type="region of interest" description="Disordered" evidence="2">
    <location>
        <begin position="43"/>
        <end position="71"/>
    </location>
</feature>
<feature type="compositionally biased region" description="Basic residues" evidence="2">
    <location>
        <begin position="46"/>
        <end position="59"/>
    </location>
</feature>
<feature type="compositionally biased region" description="Basic and acidic residues" evidence="2">
    <location>
        <begin position="60"/>
        <end position="71"/>
    </location>
</feature>